<organismHost>
    <name type="scientific">Bos taurus</name>
    <name type="common">Bovine</name>
    <dbReference type="NCBI Taxonomy" id="9913"/>
</organismHost>
<organismHost>
    <name type="scientific">Felis catus</name>
    <name type="common">Cat</name>
    <name type="synonym">Felis silvestris catus</name>
    <dbReference type="NCBI Taxonomy" id="9685"/>
</organismHost>
<organismHost>
    <name type="scientific">Homo sapiens</name>
    <name type="common">Human</name>
    <dbReference type="NCBI Taxonomy" id="9606"/>
</organismHost>
<organismHost>
    <name type="scientific">Loxodonta africana</name>
    <name type="common">African elephant</name>
    <dbReference type="NCBI Taxonomy" id="9785"/>
</organismHost>
<organismHost>
    <name type="scientific">Microtus agrestis</name>
    <name type="common">Short-tailed field vole</name>
    <dbReference type="NCBI Taxonomy" id="29092"/>
</organismHost>
<organismHost>
    <name type="scientific">Mus musculus</name>
    <name type="common">Mouse</name>
    <dbReference type="NCBI Taxonomy" id="10090"/>
</organismHost>
<organismHost>
    <name type="scientific">Myodes glareolus</name>
    <name type="common">Bank vole</name>
    <name type="synonym">Clethrionomys glareolus</name>
    <dbReference type="NCBI Taxonomy" id="447135"/>
</organismHost>
<sequence>MESVIFSINGEIIQVNKEIITASPYNFFKRIQDHHLKDEAIILNGINYHAFESLLDYMRWKKINITINNVEMILVAAIIIDVPPVVDLCVKTMIHNINSTNCIRMFNFSKRYGIKKLYNASMSEIINNITAVTSDPEFGKLSKDELTTILSHEDVNVNHEDVTAMILLKWIHKNPNDVDIINILHPKFMTNTMRNAISLLGLTISKSTKPVTRNGIKHNIVVIKNSDYISTITHYSPRTEYWTIVGNTDRQFYNANVLHNCLYIIGGMINNRHVYSVSRVDLKTKKWKTVTNMSSLKSEVSTCVNDGKLYVIGGLEFSISTGVAEYLKHGTSKWIRLPNLITPRYSGASVFVNDDIYVMGGVYTTYEKYVVLNDVECFTKNRWIKKSPMPRHHSIVYAVEYDGDIYAITGITHETRNYLYKYIVKEDKWIELYMYFNHVGKMFVCSCGDYILIIADAKYEYYPKSNTWNLFDMSTRNIEYYDMFTKDETPKCNVTHKSLPSFLSNCEKQFLQ</sequence>
<reference key="1">
    <citation type="submission" date="2003-03" db="EMBL/GenBank/DDBJ databases">
        <title>Structure-function and organization of cowpox virus strain GRI-90 complete genome.</title>
        <authorList>
            <person name="Shchelkunov S.N."/>
            <person name="Safronov P.F."/>
            <person name="Totmenin A.V."/>
            <person name="Miheev M.V."/>
            <person name="Ryazankina O.I."/>
            <person name="Petrov N.A."/>
            <person name="Gutorov V.V."/>
            <person name="Kotwal G.J."/>
            <person name="Sandakhchiev L.S."/>
        </authorList>
    </citation>
    <scope>NUCLEOTIDE SEQUENCE [LARGE SCALE GENOMIC DNA]</scope>
</reference>
<keyword id="KW-0880">Kelch repeat</keyword>
<keyword id="KW-0677">Repeat</keyword>
<protein>
    <recommendedName>
        <fullName>Kelch repeat protein C2</fullName>
    </recommendedName>
</protein>
<feature type="chain" id="PRO_0000119162" description="Kelch repeat protein C2">
    <location>
        <begin position="1"/>
        <end position="512"/>
    </location>
</feature>
<feature type="domain" description="BTB" evidence="1">
    <location>
        <begin position="2"/>
        <end position="67"/>
    </location>
</feature>
<feature type="domain" description="BACK">
    <location>
        <begin position="102"/>
        <end position="176"/>
    </location>
</feature>
<feature type="repeat" description="Kelch 1">
    <location>
        <begin position="216"/>
        <end position="261"/>
    </location>
</feature>
<feature type="repeat" description="Kelch 2">
    <location>
        <begin position="262"/>
        <end position="307"/>
    </location>
</feature>
<feature type="repeat" description="Kelch 3">
    <location>
        <begin position="309"/>
        <end position="354"/>
    </location>
</feature>
<feature type="repeat" description="Kelch 4">
    <location>
        <begin position="356"/>
        <end position="403"/>
    </location>
</feature>
<feature type="repeat" description="Kelch 5">
    <location>
        <begin position="405"/>
        <end position="449"/>
    </location>
</feature>
<feature type="repeat" description="Kelch 6">
    <location>
        <begin position="452"/>
        <end position="498"/>
    </location>
</feature>
<organism>
    <name type="scientific">Cowpox virus (strain GRI-90 / Grishak)</name>
    <name type="common">CPV</name>
    <dbReference type="NCBI Taxonomy" id="265871"/>
    <lineage>
        <taxon>Viruses</taxon>
        <taxon>Varidnaviria</taxon>
        <taxon>Bamfordvirae</taxon>
        <taxon>Nucleocytoviricota</taxon>
        <taxon>Pokkesviricetes</taxon>
        <taxon>Chitovirales</taxon>
        <taxon>Poxviridae</taxon>
        <taxon>Chordopoxvirinae</taxon>
        <taxon>Orthopoxvirus</taxon>
        <taxon>Cowpox virus</taxon>
    </lineage>
</organism>
<gene>
    <name type="ORF">C18L</name>
</gene>
<accession>P87617</accession>
<comment type="similarity">
    <text evidence="2">Belongs to the poxviruses Kelch family.</text>
</comment>
<name>C2_CWPXG</name>
<evidence type="ECO:0000255" key="1">
    <source>
        <dbReference type="PROSITE-ProRule" id="PRU00037"/>
    </source>
</evidence>
<evidence type="ECO:0000305" key="2"/>
<proteinExistence type="inferred from homology"/>
<dbReference type="EMBL" id="X94355">
    <property type="protein sequence ID" value="CAA64103.1"/>
    <property type="molecule type" value="Genomic_DNA"/>
</dbReference>
<dbReference type="SMR" id="P87617"/>
<dbReference type="Proteomes" id="UP000137384">
    <property type="component" value="Segment"/>
</dbReference>
<dbReference type="Gene3D" id="1.25.40.420">
    <property type="match status" value="1"/>
</dbReference>
<dbReference type="Gene3D" id="2.120.10.80">
    <property type="entry name" value="Kelch-type beta propeller"/>
    <property type="match status" value="1"/>
</dbReference>
<dbReference type="Gene3D" id="3.30.710.10">
    <property type="entry name" value="Potassium Channel Kv1.1, Chain A"/>
    <property type="match status" value="1"/>
</dbReference>
<dbReference type="InterPro" id="IPR011705">
    <property type="entry name" value="BACK"/>
</dbReference>
<dbReference type="InterPro" id="IPR000210">
    <property type="entry name" value="BTB/POZ_dom"/>
</dbReference>
<dbReference type="InterPro" id="IPR015915">
    <property type="entry name" value="Kelch-typ_b-propeller"/>
</dbReference>
<dbReference type="InterPro" id="IPR006652">
    <property type="entry name" value="Kelch_1"/>
</dbReference>
<dbReference type="InterPro" id="IPR011333">
    <property type="entry name" value="SKP1/BTB/POZ_sf"/>
</dbReference>
<dbReference type="PANTHER" id="PTHR24412">
    <property type="entry name" value="KELCH PROTEIN"/>
    <property type="match status" value="1"/>
</dbReference>
<dbReference type="PANTHER" id="PTHR24412:SF480">
    <property type="entry name" value="KELCH-LIKE PROTEIN 8"/>
    <property type="match status" value="1"/>
</dbReference>
<dbReference type="Pfam" id="PF07707">
    <property type="entry name" value="BACK"/>
    <property type="match status" value="1"/>
</dbReference>
<dbReference type="Pfam" id="PF00651">
    <property type="entry name" value="BTB"/>
    <property type="match status" value="1"/>
</dbReference>
<dbReference type="Pfam" id="PF01344">
    <property type="entry name" value="Kelch_1"/>
    <property type="match status" value="3"/>
</dbReference>
<dbReference type="SMART" id="SM00875">
    <property type="entry name" value="BACK"/>
    <property type="match status" value="1"/>
</dbReference>
<dbReference type="SMART" id="SM00225">
    <property type="entry name" value="BTB"/>
    <property type="match status" value="1"/>
</dbReference>
<dbReference type="SMART" id="SM00612">
    <property type="entry name" value="Kelch"/>
    <property type="match status" value="3"/>
</dbReference>
<dbReference type="SUPFAM" id="SSF117281">
    <property type="entry name" value="Kelch motif"/>
    <property type="match status" value="1"/>
</dbReference>
<dbReference type="SUPFAM" id="SSF54695">
    <property type="entry name" value="POZ domain"/>
    <property type="match status" value="1"/>
</dbReference>
<dbReference type="PROSITE" id="PS50097">
    <property type="entry name" value="BTB"/>
    <property type="match status" value="1"/>
</dbReference>